<protein>
    <recommendedName>
        <fullName evidence="1">Transaldolase</fullName>
        <ecNumber evidence="1">2.2.1.2</ecNumber>
    </recommendedName>
</protein>
<proteinExistence type="inferred from homology"/>
<evidence type="ECO:0000255" key="1">
    <source>
        <dbReference type="HAMAP-Rule" id="MF_00493"/>
    </source>
</evidence>
<feature type="chain" id="PRO_1000026530" description="Transaldolase">
    <location>
        <begin position="1"/>
        <end position="351"/>
    </location>
</feature>
<feature type="active site" description="Schiff-base intermediate with substrate" evidence="1">
    <location>
        <position position="138"/>
    </location>
</feature>
<accession>A1KVT3</accession>
<sequence>MTILSDVKALGQQIWLDNLSRSLVQSGELAQMLKQGVCGVTSNPAIFQKAFAGDALYADEVAALKQQDLTPKQRYETMAVADVQAACDVCLAEHESTGGKTGFVSLEVSPELSKDAQGTVEEARRLYAAIGCKNAMIKVPATDAGIDALETLVSDGISVNLTLLFSRVQTLKAYAAYARGIAKRLAAGQSVAHIHVVASFFISRVDGALDTTLPDHLKGKIAIALAKAAYQDWAQYFGSPEFAALETQGANRVQLLWASTGVKNPAYPDTLYVDSLIGAHTVNTVPDATLKAFIDHGTAKATLTEGADEAQAQLAETAALGIDVETLAARLQEDGLKQFEEAFEKLLAPLV</sequence>
<comment type="function">
    <text evidence="1">Transaldolase is important for the balance of metabolites in the pentose-phosphate pathway.</text>
</comment>
<comment type="catalytic activity">
    <reaction evidence="1">
        <text>D-sedoheptulose 7-phosphate + D-glyceraldehyde 3-phosphate = D-erythrose 4-phosphate + beta-D-fructose 6-phosphate</text>
        <dbReference type="Rhea" id="RHEA:17053"/>
        <dbReference type="ChEBI" id="CHEBI:16897"/>
        <dbReference type="ChEBI" id="CHEBI:57483"/>
        <dbReference type="ChEBI" id="CHEBI:57634"/>
        <dbReference type="ChEBI" id="CHEBI:59776"/>
        <dbReference type="EC" id="2.2.1.2"/>
    </reaction>
</comment>
<comment type="pathway">
    <text evidence="1">Carbohydrate degradation; pentose phosphate pathway; D-glyceraldehyde 3-phosphate and beta-D-fructose 6-phosphate from D-ribose 5-phosphate and D-xylulose 5-phosphate (non-oxidative stage): step 2/3.</text>
</comment>
<comment type="subcellular location">
    <subcellularLocation>
        <location evidence="1">Cytoplasm</location>
    </subcellularLocation>
</comment>
<comment type="similarity">
    <text evidence="1">Belongs to the transaldolase family. Type 2 subfamily.</text>
</comment>
<name>TAL_NEIMF</name>
<organism>
    <name type="scientific">Neisseria meningitidis serogroup C / serotype 2a (strain ATCC 700532 / DSM 15464 / FAM18)</name>
    <dbReference type="NCBI Taxonomy" id="272831"/>
    <lineage>
        <taxon>Bacteria</taxon>
        <taxon>Pseudomonadati</taxon>
        <taxon>Pseudomonadota</taxon>
        <taxon>Betaproteobacteria</taxon>
        <taxon>Neisseriales</taxon>
        <taxon>Neisseriaceae</taxon>
        <taxon>Neisseria</taxon>
    </lineage>
</organism>
<keyword id="KW-0963">Cytoplasm</keyword>
<keyword id="KW-0570">Pentose shunt</keyword>
<keyword id="KW-0704">Schiff base</keyword>
<keyword id="KW-0808">Transferase</keyword>
<gene>
    <name evidence="1" type="primary">tal</name>
    <name type="ordered locus">NMC1818</name>
</gene>
<dbReference type="EC" id="2.2.1.2" evidence="1"/>
<dbReference type="EMBL" id="AM421808">
    <property type="protein sequence ID" value="CAM10988.1"/>
    <property type="molecule type" value="Genomic_DNA"/>
</dbReference>
<dbReference type="RefSeq" id="WP_002220295.1">
    <property type="nucleotide sequence ID" value="NC_008767.1"/>
</dbReference>
<dbReference type="SMR" id="A1KVT3"/>
<dbReference type="KEGG" id="nmc:NMC1818"/>
<dbReference type="HOGENOM" id="CLU_050771_1_0_4"/>
<dbReference type="UniPathway" id="UPA00115">
    <property type="reaction ID" value="UER00414"/>
</dbReference>
<dbReference type="Proteomes" id="UP000002286">
    <property type="component" value="Chromosome"/>
</dbReference>
<dbReference type="GO" id="GO:0005737">
    <property type="term" value="C:cytoplasm"/>
    <property type="evidence" value="ECO:0007669"/>
    <property type="project" value="UniProtKB-SubCell"/>
</dbReference>
<dbReference type="GO" id="GO:0004801">
    <property type="term" value="F:transaldolase activity"/>
    <property type="evidence" value="ECO:0007669"/>
    <property type="project" value="UniProtKB-UniRule"/>
</dbReference>
<dbReference type="GO" id="GO:0005975">
    <property type="term" value="P:carbohydrate metabolic process"/>
    <property type="evidence" value="ECO:0007669"/>
    <property type="project" value="InterPro"/>
</dbReference>
<dbReference type="GO" id="GO:0006098">
    <property type="term" value="P:pentose-phosphate shunt"/>
    <property type="evidence" value="ECO:0007669"/>
    <property type="project" value="UniProtKB-UniRule"/>
</dbReference>
<dbReference type="CDD" id="cd00955">
    <property type="entry name" value="Transaldolase_like"/>
    <property type="match status" value="1"/>
</dbReference>
<dbReference type="Gene3D" id="3.20.20.70">
    <property type="entry name" value="Aldolase class I"/>
    <property type="match status" value="1"/>
</dbReference>
<dbReference type="HAMAP" id="MF_00493">
    <property type="entry name" value="Transaldolase_2"/>
    <property type="match status" value="1"/>
</dbReference>
<dbReference type="InterPro" id="IPR013785">
    <property type="entry name" value="Aldolase_TIM"/>
</dbReference>
<dbReference type="InterPro" id="IPR001585">
    <property type="entry name" value="TAL/FSA"/>
</dbReference>
<dbReference type="InterPro" id="IPR004732">
    <property type="entry name" value="Transaldolase_2"/>
</dbReference>
<dbReference type="InterPro" id="IPR018225">
    <property type="entry name" value="Transaldolase_AS"/>
</dbReference>
<dbReference type="NCBIfam" id="NF002881">
    <property type="entry name" value="PRK03343.1"/>
    <property type="match status" value="1"/>
</dbReference>
<dbReference type="NCBIfam" id="TIGR00876">
    <property type="entry name" value="tal_mycobact"/>
    <property type="match status" value="1"/>
</dbReference>
<dbReference type="PANTHER" id="PTHR10683">
    <property type="entry name" value="TRANSALDOLASE"/>
    <property type="match status" value="1"/>
</dbReference>
<dbReference type="PANTHER" id="PTHR10683:SF31">
    <property type="entry name" value="TRANSALDOLASE"/>
    <property type="match status" value="1"/>
</dbReference>
<dbReference type="Pfam" id="PF00923">
    <property type="entry name" value="TAL_FSA"/>
    <property type="match status" value="1"/>
</dbReference>
<dbReference type="PIRSF" id="PIRSF036915">
    <property type="entry name" value="Trnald_Bac_Plnt"/>
    <property type="match status" value="1"/>
</dbReference>
<dbReference type="SUPFAM" id="SSF51569">
    <property type="entry name" value="Aldolase"/>
    <property type="match status" value="1"/>
</dbReference>
<dbReference type="PROSITE" id="PS01054">
    <property type="entry name" value="TRANSALDOLASE_1"/>
    <property type="match status" value="1"/>
</dbReference>
<dbReference type="PROSITE" id="PS00958">
    <property type="entry name" value="TRANSALDOLASE_2"/>
    <property type="match status" value="1"/>
</dbReference>
<reference key="1">
    <citation type="journal article" date="2007" name="PLoS Genet.">
        <title>Meningococcal genetic variation mechanisms viewed through comparative analysis of serogroup C strain FAM18.</title>
        <authorList>
            <person name="Bentley S.D."/>
            <person name="Vernikos G.S."/>
            <person name="Snyder L.A.S."/>
            <person name="Churcher C."/>
            <person name="Arrowsmith C."/>
            <person name="Chillingworth T."/>
            <person name="Cronin A."/>
            <person name="Davis P.H."/>
            <person name="Holroyd N.E."/>
            <person name="Jagels K."/>
            <person name="Maddison M."/>
            <person name="Moule S."/>
            <person name="Rabbinowitsch E."/>
            <person name="Sharp S."/>
            <person name="Unwin L."/>
            <person name="Whitehead S."/>
            <person name="Quail M.A."/>
            <person name="Achtman M."/>
            <person name="Barrell B.G."/>
            <person name="Saunders N.J."/>
            <person name="Parkhill J."/>
        </authorList>
    </citation>
    <scope>NUCLEOTIDE SEQUENCE [LARGE SCALE GENOMIC DNA]</scope>
    <source>
        <strain>ATCC 700532 / DSM 15464 / FAM18</strain>
    </source>
</reference>